<sequence length="191" mass="20776">MLKKTLAALALGSALFTAGQAMAADYKIDKEGQHAFIEFRIKHLGYSWLYGRFNDFDGSFTFDEKNPSADKVKVTINTNSVDTNHAERDKHLRSGDFLNVSKNPTATFESTEVKANGDSADITGNLTLNGVTKPVTIKAKLIGQGDDPWGGYRAGFEGSATLKLKDFGIKMDLGPASQEVELLLSVEGIRQ</sequence>
<evidence type="ECO:0000255" key="1">
    <source>
        <dbReference type="HAMAP-Rule" id="MF_00780"/>
    </source>
</evidence>
<evidence type="ECO:0007829" key="2">
    <source>
        <dbReference type="PDB" id="7BWL"/>
    </source>
</evidence>
<comment type="subcellular location">
    <subcellularLocation>
        <location evidence="1">Periplasm</location>
    </subcellularLocation>
</comment>
<comment type="similarity">
    <text evidence="1">Belongs to the UPF0312 family. Type 1 subfamily.</text>
</comment>
<organism>
    <name type="scientific">Pseudomonas aeruginosa (strain ATCC 15692 / DSM 22644 / CIP 104116 / JCM 14847 / LMG 12228 / 1C / PRS 101 / PAO1)</name>
    <dbReference type="NCBI Taxonomy" id="208964"/>
    <lineage>
        <taxon>Bacteria</taxon>
        <taxon>Pseudomonadati</taxon>
        <taxon>Pseudomonadota</taxon>
        <taxon>Gammaproteobacteria</taxon>
        <taxon>Pseudomonadales</taxon>
        <taxon>Pseudomonadaceae</taxon>
        <taxon>Pseudomonas</taxon>
    </lineage>
</organism>
<keyword id="KW-0002">3D-structure</keyword>
<keyword id="KW-0574">Periplasm</keyword>
<keyword id="KW-1185">Reference proteome</keyword>
<keyword id="KW-0732">Signal</keyword>
<accession>Q9I690</accession>
<reference key="1">
    <citation type="journal article" date="2000" name="Nature">
        <title>Complete genome sequence of Pseudomonas aeruginosa PAO1, an opportunistic pathogen.</title>
        <authorList>
            <person name="Stover C.K."/>
            <person name="Pham X.-Q.T."/>
            <person name="Erwin A.L."/>
            <person name="Mizoguchi S.D."/>
            <person name="Warrener P."/>
            <person name="Hickey M.J."/>
            <person name="Brinkman F.S.L."/>
            <person name="Hufnagle W.O."/>
            <person name="Kowalik D.J."/>
            <person name="Lagrou M."/>
            <person name="Garber R.L."/>
            <person name="Goltry L."/>
            <person name="Tolentino E."/>
            <person name="Westbrock-Wadman S."/>
            <person name="Yuan Y."/>
            <person name="Brody L.L."/>
            <person name="Coulter S.N."/>
            <person name="Folger K.R."/>
            <person name="Kas A."/>
            <person name="Larbig K."/>
            <person name="Lim R.M."/>
            <person name="Smith K.A."/>
            <person name="Spencer D.H."/>
            <person name="Wong G.K.-S."/>
            <person name="Wu Z."/>
            <person name="Paulsen I.T."/>
            <person name="Reizer J."/>
            <person name="Saier M.H. Jr."/>
            <person name="Hancock R.E.W."/>
            <person name="Lory S."/>
            <person name="Olson M.V."/>
        </authorList>
    </citation>
    <scope>NUCLEOTIDE SEQUENCE [LARGE SCALE GENOMIC DNA]</scope>
    <source>
        <strain>ATCC 15692 / DSM 22644 / CIP 104116 / JCM 14847 / LMG 12228 / 1C / PRS 101 / PAO1</strain>
    </source>
</reference>
<gene>
    <name type="ordered locus">PA0423</name>
</gene>
<proteinExistence type="evidence at protein level"/>
<protein>
    <recommendedName>
        <fullName evidence="1">UPF0312 protein PA0423</fullName>
    </recommendedName>
</protein>
<name>Y423_PSEAE</name>
<feature type="signal peptide" evidence="1">
    <location>
        <begin position="1"/>
        <end position="23"/>
    </location>
</feature>
<feature type="chain" id="PRO_0000036280" description="UPF0312 protein PA0423">
    <location>
        <begin position="24"/>
        <end position="191"/>
    </location>
</feature>
<feature type="strand" evidence="2">
    <location>
        <begin position="25"/>
        <end position="28"/>
    </location>
</feature>
<feature type="turn" evidence="2">
    <location>
        <begin position="30"/>
        <end position="33"/>
    </location>
</feature>
<feature type="strand" evidence="2">
    <location>
        <begin position="35"/>
        <end position="43"/>
    </location>
</feature>
<feature type="turn" evidence="2">
    <location>
        <begin position="44"/>
        <end position="46"/>
    </location>
</feature>
<feature type="strand" evidence="2">
    <location>
        <begin position="47"/>
        <end position="54"/>
    </location>
</feature>
<feature type="strand" evidence="2">
    <location>
        <begin position="56"/>
        <end position="61"/>
    </location>
</feature>
<feature type="helix" evidence="2">
    <location>
        <begin position="67"/>
        <end position="69"/>
    </location>
</feature>
<feature type="strand" evidence="2">
    <location>
        <begin position="71"/>
        <end position="77"/>
    </location>
</feature>
<feature type="helix" evidence="2">
    <location>
        <begin position="78"/>
        <end position="80"/>
    </location>
</feature>
<feature type="helix" evidence="2">
    <location>
        <begin position="86"/>
        <end position="93"/>
    </location>
</feature>
<feature type="turn" evidence="2">
    <location>
        <begin position="95"/>
        <end position="98"/>
    </location>
</feature>
<feature type="turn" evidence="2">
    <location>
        <begin position="100"/>
        <end position="102"/>
    </location>
</feature>
<feature type="strand" evidence="2">
    <location>
        <begin position="105"/>
        <end position="116"/>
    </location>
</feature>
<feature type="strand" evidence="2">
    <location>
        <begin position="119"/>
        <end position="128"/>
    </location>
</feature>
<feature type="strand" evidence="2">
    <location>
        <begin position="131"/>
        <end position="146"/>
    </location>
</feature>
<feature type="strand" evidence="2">
    <location>
        <begin position="152"/>
        <end position="163"/>
    </location>
</feature>
<feature type="helix" evidence="2">
    <location>
        <begin position="164"/>
        <end position="167"/>
    </location>
</feature>
<feature type="strand" evidence="2">
    <location>
        <begin position="178"/>
        <end position="190"/>
    </location>
</feature>
<dbReference type="EMBL" id="AE004091">
    <property type="protein sequence ID" value="AAG03812.1"/>
    <property type="molecule type" value="Genomic_DNA"/>
</dbReference>
<dbReference type="PIR" id="B83593">
    <property type="entry name" value="B83593"/>
</dbReference>
<dbReference type="RefSeq" id="WP_003084626.1">
    <property type="nucleotide sequence ID" value="NZ_QZGE01000016.1"/>
</dbReference>
<dbReference type="PDB" id="7BWL">
    <property type="method" value="X-ray"/>
    <property type="resolution" value="2.25 A"/>
    <property type="chains" value="A=1-191"/>
</dbReference>
<dbReference type="PDBsum" id="7BWL"/>
<dbReference type="SMR" id="Q9I690"/>
<dbReference type="FunCoup" id="Q9I690">
    <property type="interactions" value="145"/>
</dbReference>
<dbReference type="STRING" id="208964.PA0423"/>
<dbReference type="MEROPS" id="S85.001"/>
<dbReference type="PaxDb" id="208964-PA0423"/>
<dbReference type="KEGG" id="pae:PA0423"/>
<dbReference type="PATRIC" id="fig|208964.12.peg.445"/>
<dbReference type="PseudoCAP" id="PA0423"/>
<dbReference type="HOGENOM" id="CLU_071003_1_2_6"/>
<dbReference type="InParanoid" id="Q9I690"/>
<dbReference type="OrthoDB" id="9811006at2"/>
<dbReference type="PhylomeDB" id="Q9I690"/>
<dbReference type="BioCyc" id="PAER208964:G1FZ6-427-MONOMER"/>
<dbReference type="PHI-base" id="PHI:3166"/>
<dbReference type="Proteomes" id="UP000002438">
    <property type="component" value="Chromosome"/>
</dbReference>
<dbReference type="GO" id="GO:0005615">
    <property type="term" value="C:extracellular space"/>
    <property type="evidence" value="ECO:0000314"/>
    <property type="project" value="PseudoCAP"/>
</dbReference>
<dbReference type="GO" id="GO:0042597">
    <property type="term" value="C:periplasmic space"/>
    <property type="evidence" value="ECO:0007669"/>
    <property type="project" value="UniProtKB-SubCell"/>
</dbReference>
<dbReference type="FunFam" id="2.40.128.110:FF:000001">
    <property type="entry name" value="UPF0312 protein HMPREF3014_17255"/>
    <property type="match status" value="1"/>
</dbReference>
<dbReference type="Gene3D" id="2.40.128.110">
    <property type="entry name" value="Lipid/polyisoprenoid-binding, YceI-like"/>
    <property type="match status" value="1"/>
</dbReference>
<dbReference type="HAMAP" id="MF_00780">
    <property type="entry name" value="UPF0312"/>
    <property type="match status" value="1"/>
</dbReference>
<dbReference type="InterPro" id="IPR007372">
    <property type="entry name" value="Lipid/polyisoprenoid-bd_YceI"/>
</dbReference>
<dbReference type="InterPro" id="IPR036761">
    <property type="entry name" value="TTHA0802/YceI-like_sf"/>
</dbReference>
<dbReference type="InterPro" id="IPR023480">
    <property type="entry name" value="UPF0312/YceI"/>
</dbReference>
<dbReference type="NCBIfam" id="NF002994">
    <property type="entry name" value="PRK03757.1"/>
    <property type="match status" value="1"/>
</dbReference>
<dbReference type="PANTHER" id="PTHR34406">
    <property type="entry name" value="PROTEIN YCEI"/>
    <property type="match status" value="1"/>
</dbReference>
<dbReference type="PANTHER" id="PTHR34406:SF1">
    <property type="entry name" value="PROTEIN YCEI"/>
    <property type="match status" value="1"/>
</dbReference>
<dbReference type="Pfam" id="PF04264">
    <property type="entry name" value="YceI"/>
    <property type="match status" value="1"/>
</dbReference>
<dbReference type="SMART" id="SM00867">
    <property type="entry name" value="YceI"/>
    <property type="match status" value="1"/>
</dbReference>
<dbReference type="SUPFAM" id="SSF101874">
    <property type="entry name" value="YceI-like"/>
    <property type="match status" value="1"/>
</dbReference>